<keyword id="KW-1003">Cell membrane</keyword>
<keyword id="KW-0325">Glycoprotein</keyword>
<keyword id="KW-0336">GPI-anchor</keyword>
<keyword id="KW-0449">Lipoprotein</keyword>
<keyword id="KW-0472">Membrane</keyword>
<keyword id="KW-1185">Reference proteome</keyword>
<keyword id="KW-0732">Signal</keyword>
<keyword id="KW-0770">Synapse</keyword>
<evidence type="ECO:0000250" key="1"/>
<evidence type="ECO:0000255" key="2"/>
<evidence type="ECO:0000305" key="3"/>
<reference key="1">
    <citation type="submission" date="2006-01" db="EMBL/GenBank/DDBJ databases">
        <authorList>
            <consortium name="NIH - Mammalian Gene Collection (MGC) project"/>
        </authorList>
    </citation>
    <scope>NUCLEOTIDE SEQUENCE [LARGE SCALE MRNA]</scope>
    <source>
        <strain>Hereford</strain>
        <tissue>Hypothalamus</tissue>
    </source>
</reference>
<gene>
    <name type="primary">NRN1</name>
</gene>
<comment type="function">
    <text evidence="1">Promotes neurite outgrowth and especially branching of neuritic processes in primary hippocampal and cortical cells.</text>
</comment>
<comment type="subunit">
    <text evidence="1">Component of the outer core of AMPAR complex. AMPAR complex consists of an inner core made of 4 pore-forming GluA/GRIA proteins (GRIA1, GRIA2, GRIA3 and GRIA4) and 4 major auxiliary subunits arranged in a twofold symmetry. One of the two pairs of distinct binding sites is occupied either by CNIH2, CNIH3 or CACNG2, CACNG3. The other harbors CACNG2, CACNG3, CACNG4, CACNG8 or GSG1L. This inner core of AMPAR complex is complemented by outer core constituents binding directly to the GluA/GRIA proteins at sites distinct from the interaction sites of the inner core constituents. Outer core constituents include at least PRRT1, PRRT2, CKAMP44/SHISA9, FRRS1L and NRN1. The proteins of the inner and outer core serve as a platform for other, more peripherally associated AMPAR constituents. Alone or in combination, these auxiliary subunits control the gating and pharmacology of the AMPAR complex and profoundly impact their biogenesis and protein processing (By similarity).</text>
</comment>
<comment type="subcellular location">
    <subcellularLocation>
        <location evidence="3">Cell membrane</location>
        <topology evidence="3">Lipid-anchor</topology>
        <topology evidence="3">GPI-anchor</topology>
    </subcellularLocation>
    <subcellularLocation>
        <location evidence="1">Synapse</location>
    </subcellularLocation>
</comment>
<comment type="similarity">
    <text evidence="3">Belongs to the neuritin family.</text>
</comment>
<accession>Q2KIC6</accession>
<feature type="signal peptide" evidence="2">
    <location>
        <begin position="1"/>
        <end position="27"/>
    </location>
</feature>
<feature type="chain" id="PRO_0000262510" description="Neuritin">
    <location>
        <begin position="28"/>
        <end position="116"/>
    </location>
</feature>
<feature type="propeptide" id="PRO_0000262511" description="Removed in mature form" evidence="2">
    <location>
        <begin position="117"/>
        <end position="142"/>
    </location>
</feature>
<feature type="lipid moiety-binding region" description="GPI-anchor amidated glycine" evidence="2">
    <location>
        <position position="116"/>
    </location>
</feature>
<organism>
    <name type="scientific">Bos taurus</name>
    <name type="common">Bovine</name>
    <dbReference type="NCBI Taxonomy" id="9913"/>
    <lineage>
        <taxon>Eukaryota</taxon>
        <taxon>Metazoa</taxon>
        <taxon>Chordata</taxon>
        <taxon>Craniata</taxon>
        <taxon>Vertebrata</taxon>
        <taxon>Euteleostomi</taxon>
        <taxon>Mammalia</taxon>
        <taxon>Eutheria</taxon>
        <taxon>Laurasiatheria</taxon>
        <taxon>Artiodactyla</taxon>
        <taxon>Ruminantia</taxon>
        <taxon>Pecora</taxon>
        <taxon>Bovidae</taxon>
        <taxon>Bovinae</taxon>
        <taxon>Bos</taxon>
    </lineage>
</organism>
<sequence>MGLKLNGRYISLILAVQIAYLVQAVRAAGKCDAVFKGFSDCLLKLGDSMANYPQGLDDKTNIKTVCTYWEDFHSCTVTALTDCQEGAKDMWDKLRKESKNLNIQGSLFELCGGGNGAAGPLLPALPVLLVSLSAALATWLSF</sequence>
<proteinExistence type="evidence at transcript level"/>
<protein>
    <recommendedName>
        <fullName>Neuritin</fullName>
    </recommendedName>
</protein>
<dbReference type="EMBL" id="BC112687">
    <property type="protein sequence ID" value="AAI12688.1"/>
    <property type="molecule type" value="mRNA"/>
</dbReference>
<dbReference type="RefSeq" id="NP_001039903.1">
    <property type="nucleotide sequence ID" value="NM_001046438.1"/>
</dbReference>
<dbReference type="FunCoup" id="Q2KIC6">
    <property type="interactions" value="290"/>
</dbReference>
<dbReference type="STRING" id="9913.ENSBTAP00000013021"/>
<dbReference type="PaxDb" id="9913-ENSBTAP00000013021"/>
<dbReference type="Ensembl" id="ENSBTAT00000013021.6">
    <property type="protein sequence ID" value="ENSBTAP00000013021.4"/>
    <property type="gene ID" value="ENSBTAG00000009873.6"/>
</dbReference>
<dbReference type="GeneID" id="538730"/>
<dbReference type="KEGG" id="bta:538730"/>
<dbReference type="CTD" id="51299"/>
<dbReference type="VEuPathDB" id="HostDB:ENSBTAG00000009873"/>
<dbReference type="VGNC" id="VGNC:32265">
    <property type="gene designation" value="NRN1"/>
</dbReference>
<dbReference type="eggNOG" id="ENOG502RZNR">
    <property type="taxonomic scope" value="Eukaryota"/>
</dbReference>
<dbReference type="GeneTree" id="ENSGT00530000063853"/>
<dbReference type="HOGENOM" id="CLU_135101_0_0_1"/>
<dbReference type="InParanoid" id="Q2KIC6"/>
<dbReference type="OMA" id="CAYWEDF"/>
<dbReference type="OrthoDB" id="9928047at2759"/>
<dbReference type="TreeFam" id="TF332589"/>
<dbReference type="Reactome" id="R-BTA-163125">
    <property type="pathway name" value="Post-translational modification: synthesis of GPI-anchored proteins"/>
</dbReference>
<dbReference type="Proteomes" id="UP000009136">
    <property type="component" value="Chromosome 23"/>
</dbReference>
<dbReference type="Bgee" id="ENSBTAG00000009873">
    <property type="expression patterns" value="Expressed in occipital lobe and 92 other cell types or tissues"/>
</dbReference>
<dbReference type="GO" id="GO:0032281">
    <property type="term" value="C:AMPA glutamate receptor complex"/>
    <property type="evidence" value="ECO:0007669"/>
    <property type="project" value="Ensembl"/>
</dbReference>
<dbReference type="GO" id="GO:0005615">
    <property type="term" value="C:extracellular space"/>
    <property type="evidence" value="ECO:0007669"/>
    <property type="project" value="Ensembl"/>
</dbReference>
<dbReference type="GO" id="GO:0098978">
    <property type="term" value="C:glutamatergic synapse"/>
    <property type="evidence" value="ECO:0007669"/>
    <property type="project" value="Ensembl"/>
</dbReference>
<dbReference type="GO" id="GO:0005886">
    <property type="term" value="C:plasma membrane"/>
    <property type="evidence" value="ECO:0000318"/>
    <property type="project" value="GO_Central"/>
</dbReference>
<dbReference type="GO" id="GO:0098793">
    <property type="term" value="C:presynapse"/>
    <property type="evidence" value="ECO:0007669"/>
    <property type="project" value="GOC"/>
</dbReference>
<dbReference type="GO" id="GO:0098552">
    <property type="term" value="C:side of membrane"/>
    <property type="evidence" value="ECO:0007669"/>
    <property type="project" value="UniProtKB-KW"/>
</dbReference>
<dbReference type="GO" id="GO:0042802">
    <property type="term" value="F:identical protein binding"/>
    <property type="evidence" value="ECO:0007669"/>
    <property type="project" value="Ensembl"/>
</dbReference>
<dbReference type="GO" id="GO:1990138">
    <property type="term" value="P:neuron projection extension"/>
    <property type="evidence" value="ECO:0000318"/>
    <property type="project" value="GO_Central"/>
</dbReference>
<dbReference type="GO" id="GO:0099171">
    <property type="term" value="P:presynaptic modulation of chemical synaptic transmission"/>
    <property type="evidence" value="ECO:0007669"/>
    <property type="project" value="Ensembl"/>
</dbReference>
<dbReference type="GO" id="GO:0090128">
    <property type="term" value="P:regulation of synapse maturation"/>
    <property type="evidence" value="ECO:0007669"/>
    <property type="project" value="Ensembl"/>
</dbReference>
<dbReference type="InterPro" id="IPR026144">
    <property type="entry name" value="Neuritin_fam"/>
</dbReference>
<dbReference type="PANTHER" id="PTHR15902:SF1">
    <property type="entry name" value="NEURITIN"/>
    <property type="match status" value="1"/>
</dbReference>
<dbReference type="PANTHER" id="PTHR15902">
    <property type="entry name" value="NEURITIN-RELATED"/>
    <property type="match status" value="1"/>
</dbReference>
<dbReference type="Pfam" id="PF15056">
    <property type="entry name" value="NRN1"/>
    <property type="match status" value="1"/>
</dbReference>
<name>NRN1_BOVIN</name>